<organism>
    <name type="scientific">Acanthamoeba polyphaga mimivirus</name>
    <name type="common">APMV</name>
    <dbReference type="NCBI Taxonomy" id="212035"/>
    <lineage>
        <taxon>Viruses</taxon>
        <taxon>Varidnaviria</taxon>
        <taxon>Bamfordvirae</taxon>
        <taxon>Nucleocytoviricota</taxon>
        <taxon>Megaviricetes</taxon>
        <taxon>Imitervirales</taxon>
        <taxon>Mimiviridae</taxon>
        <taxon>Megamimivirinae</taxon>
        <taxon>Mimivirus</taxon>
        <taxon>Mimivirus bradfordmassiliense</taxon>
    </lineage>
</organism>
<organismHost>
    <name type="scientific">Acanthamoeba polyphaga</name>
    <name type="common">Amoeba</name>
    <dbReference type="NCBI Taxonomy" id="5757"/>
</organismHost>
<name>YL043_MIMIV</name>
<sequence length="212" mass="25300">MKYMVYHLQIRNDFHCPTCRQPKVFFYNTLEEAYNKACNYIGNMDDFDREMLKKGSSIWIDEWIRRKNGDEYQIIKITTNKEYELLKYENEKFNLDSDVDENSDVNEDSNVDENIIKYMLLHIKVKTSKWCPNNIKYFVSFYFTLENACDFADIGDKTNLLKNLESVWINKNKIDVGLCSKGGDYFQIIELESDKKINLNKCCEQLKKLKYN</sequence>
<proteinExistence type="predicted"/>
<feature type="chain" id="PRO_0000243960" description="Uncharacterized protein L43">
    <location>
        <begin position="1"/>
        <end position="212"/>
    </location>
</feature>
<keyword id="KW-1185">Reference proteome</keyword>
<protein>
    <recommendedName>
        <fullName>Uncharacterized protein L43</fullName>
    </recommendedName>
</protein>
<dbReference type="EMBL" id="AY653733">
    <property type="protein sequence ID" value="AAV50318.1"/>
    <property type="molecule type" value="Genomic_DNA"/>
</dbReference>
<dbReference type="KEGG" id="vg:9924629"/>
<dbReference type="Proteomes" id="UP000001134">
    <property type="component" value="Genome"/>
</dbReference>
<accession>Q5UPB8</accession>
<reference key="1">
    <citation type="journal article" date="2004" name="Science">
        <title>The 1.2-megabase genome sequence of Mimivirus.</title>
        <authorList>
            <person name="Raoult D."/>
            <person name="Audic S."/>
            <person name="Robert C."/>
            <person name="Abergel C."/>
            <person name="Renesto P."/>
            <person name="Ogata H."/>
            <person name="La Scola B."/>
            <person name="Susan M."/>
            <person name="Claverie J.-M."/>
        </authorList>
    </citation>
    <scope>NUCLEOTIDE SEQUENCE [LARGE SCALE GENOMIC DNA]</scope>
    <source>
        <strain>Rowbotham-Bradford</strain>
    </source>
</reference>
<gene>
    <name type="ordered locus">MIMI_L43</name>
</gene>